<protein>
    <recommendedName>
        <fullName>Urotensin-2A</fullName>
    </recommendedName>
    <alternativeName>
        <fullName>Urotensin IIA</fullName>
        <shortName>U-IIA</shortName>
        <shortName>UIIA</shortName>
    </alternativeName>
</protein>
<sequence>GSGADCFWKYCV</sequence>
<proteinExistence type="evidence at protein level"/>
<organism>
    <name type="scientific">Catostomus commersonii</name>
    <name type="common">White sucker</name>
    <name type="synonym">Cyprinus commersonnii</name>
    <dbReference type="NCBI Taxonomy" id="7971"/>
    <lineage>
        <taxon>Eukaryota</taxon>
        <taxon>Metazoa</taxon>
        <taxon>Chordata</taxon>
        <taxon>Craniata</taxon>
        <taxon>Vertebrata</taxon>
        <taxon>Euteleostomi</taxon>
        <taxon>Actinopterygii</taxon>
        <taxon>Neopterygii</taxon>
        <taxon>Teleostei</taxon>
        <taxon>Ostariophysi</taxon>
        <taxon>Cypriniformes</taxon>
        <taxon>Catostomoidei</taxon>
        <taxon>Catostomidae</taxon>
        <taxon>Catostomus</taxon>
    </lineage>
</organism>
<name>UTS2A_CATCO</name>
<evidence type="ECO:0000305" key="1"/>
<reference key="1">
    <citation type="journal article" date="1983" name="Peptides">
        <title>Isolation and amino acid sequence of two urotensin II peptides from Catostomus commersoni urophyses.</title>
        <authorList>
            <person name="McMaster D."/>
            <person name="Lederis K."/>
        </authorList>
    </citation>
    <scope>PROTEIN SEQUENCE</scope>
</reference>
<comment type="function">
    <text>Urotensin is found in the teleost caudal neurosecretory system. It has a suggested role in osmoregulation and as a corticotropin-releasing factor.</text>
</comment>
<comment type="subcellular location">
    <subcellularLocation>
        <location>Secreted</location>
    </subcellularLocation>
</comment>
<comment type="similarity">
    <text evidence="1">Belongs to the urotensin-2 family.</text>
</comment>
<accession>P04558</accession>
<dbReference type="PIR" id="JS0423">
    <property type="entry name" value="JS0423"/>
</dbReference>
<dbReference type="GO" id="GO:0005576">
    <property type="term" value="C:extracellular region"/>
    <property type="evidence" value="ECO:0007669"/>
    <property type="project" value="UniProtKB-SubCell"/>
</dbReference>
<dbReference type="GO" id="GO:0005179">
    <property type="term" value="F:hormone activity"/>
    <property type="evidence" value="ECO:0007669"/>
    <property type="project" value="UniProtKB-KW"/>
</dbReference>
<dbReference type="GO" id="GO:0097746">
    <property type="term" value="P:blood vessel diameter maintenance"/>
    <property type="evidence" value="ECO:0007669"/>
    <property type="project" value="InterPro"/>
</dbReference>
<dbReference type="GO" id="GO:0008217">
    <property type="term" value="P:regulation of blood pressure"/>
    <property type="evidence" value="ECO:0007669"/>
    <property type="project" value="InterPro"/>
</dbReference>
<dbReference type="InterPro" id="IPR001483">
    <property type="entry name" value="Urotensin_II"/>
</dbReference>
<dbReference type="Pfam" id="PF02083">
    <property type="entry name" value="Urotensin_II"/>
    <property type="match status" value="1"/>
</dbReference>
<dbReference type="PROSITE" id="PS00984">
    <property type="entry name" value="UROTENSIN_II"/>
    <property type="match status" value="1"/>
</dbReference>
<keyword id="KW-0903">Direct protein sequencing</keyword>
<keyword id="KW-1015">Disulfide bond</keyword>
<keyword id="KW-0372">Hormone</keyword>
<keyword id="KW-0964">Secreted</keyword>
<feature type="peptide" id="PRO_0000044565" description="Urotensin-2A">
    <location>
        <begin position="1"/>
        <end position="12"/>
    </location>
</feature>
<feature type="disulfide bond">
    <location>
        <begin position="6"/>
        <end position="11"/>
    </location>
</feature>